<feature type="chain" id="PRO_1000032026" description="Elongation factor 4">
    <location>
        <begin position="1"/>
        <end position="596"/>
    </location>
</feature>
<feature type="domain" description="tr-type G">
    <location>
        <begin position="2"/>
        <end position="183"/>
    </location>
</feature>
<feature type="binding site" evidence="1">
    <location>
        <begin position="14"/>
        <end position="19"/>
    </location>
    <ligand>
        <name>GTP</name>
        <dbReference type="ChEBI" id="CHEBI:37565"/>
    </ligand>
</feature>
<feature type="binding site" evidence="1">
    <location>
        <begin position="130"/>
        <end position="133"/>
    </location>
    <ligand>
        <name>GTP</name>
        <dbReference type="ChEBI" id="CHEBI:37565"/>
    </ligand>
</feature>
<sequence length="596" mass="66200">MENIRNFSIIAHIDHGKSTLADRLIQECGAIEDRKMSDQVMDTMDIEKERGITIKAQSVRLTYKKDGKEYILNLIDTPGHVDFSYEVSRSLASSEGALLVVDASQGVEAQTIANVYIALENDLELIPVINKIDLPAADPERVKADIENTIGLDCTDAIEVSAKTGQGINELLDAIIERIPAPSGDPTAPTKALIYDSWFDSYLGALALVRVFEGEIKKGQEVLVMGTGKTHEVIDLMYPHPINPQKTSTIKTGEIGIVVMGLKNIGDVQVGDTITDAKNPTPEPIEGFEEAKPFVFAGLYPIDTDKFEDLREALNKLKLNDAAIAFEPETSAALGFGFRVGFLGLLHMEVVKERLEREFGLDLIATAPTVTYKVKKTDGETIEIQNPSELPPPQEIDTIYEPYVKATIITPTEFLGNVLNLLSEKRGVQLKMDYITQDRVMLEYEIPMNEIVMDFYDKLKTVTKGYASFDYEPSGYKEGDLVKLDIRVAGEVVDALSIIVPKEKAQYKGRELVKKMKELVPRQLFEVAIQASIGNKIIARETVSAMRKNVTAKCYGGDITRKRKLLEKQKEGKKRMKAIGKVQLPQEAFLSVLKID</sequence>
<reference key="1">
    <citation type="journal article" date="2007" name="Proc. Natl. Acad. Sci. U.S.A.">
        <title>Deep-sea vent epsilon-proteobacterial genomes provide insights into emergence of pathogens.</title>
        <authorList>
            <person name="Nakagawa S."/>
            <person name="Takaki Y."/>
            <person name="Shimamura S."/>
            <person name="Reysenbach A.-L."/>
            <person name="Takai K."/>
            <person name="Horikoshi K."/>
        </authorList>
    </citation>
    <scope>NUCLEOTIDE SEQUENCE [LARGE SCALE GENOMIC DNA]</scope>
    <source>
        <strain>SB155-2</strain>
    </source>
</reference>
<comment type="function">
    <text evidence="1">Required for accurate and efficient protein synthesis under certain stress conditions. May act as a fidelity factor of the translation reaction, by catalyzing a one-codon backward translocation of tRNAs on improperly translocated ribosomes. Back-translocation proceeds from a post-translocation (POST) complex to a pre-translocation (PRE) complex, thus giving elongation factor G a second chance to translocate the tRNAs correctly. Binds to ribosomes in a GTP-dependent manner.</text>
</comment>
<comment type="catalytic activity">
    <reaction evidence="1">
        <text>GTP + H2O = GDP + phosphate + H(+)</text>
        <dbReference type="Rhea" id="RHEA:19669"/>
        <dbReference type="ChEBI" id="CHEBI:15377"/>
        <dbReference type="ChEBI" id="CHEBI:15378"/>
        <dbReference type="ChEBI" id="CHEBI:37565"/>
        <dbReference type="ChEBI" id="CHEBI:43474"/>
        <dbReference type="ChEBI" id="CHEBI:58189"/>
        <dbReference type="EC" id="3.6.5.n1"/>
    </reaction>
</comment>
<comment type="subcellular location">
    <subcellularLocation>
        <location evidence="1">Cell inner membrane</location>
        <topology evidence="1">Peripheral membrane protein</topology>
        <orientation evidence="1">Cytoplasmic side</orientation>
    </subcellularLocation>
</comment>
<comment type="similarity">
    <text evidence="1">Belongs to the TRAFAC class translation factor GTPase superfamily. Classic translation factor GTPase family. LepA subfamily.</text>
</comment>
<name>LEPA_NITSB</name>
<protein>
    <recommendedName>
        <fullName evidence="1">Elongation factor 4</fullName>
        <shortName evidence="1">EF-4</shortName>
        <ecNumber evidence="1">3.6.5.n1</ecNumber>
    </recommendedName>
    <alternativeName>
        <fullName evidence="1">Ribosomal back-translocase LepA</fullName>
    </alternativeName>
</protein>
<accession>A6Q241</accession>
<dbReference type="EC" id="3.6.5.n1" evidence="1"/>
<dbReference type="EMBL" id="AP009178">
    <property type="protein sequence ID" value="BAF69550.1"/>
    <property type="molecule type" value="Genomic_DNA"/>
</dbReference>
<dbReference type="RefSeq" id="WP_012081813.1">
    <property type="nucleotide sequence ID" value="NC_009662.1"/>
</dbReference>
<dbReference type="SMR" id="A6Q241"/>
<dbReference type="FunCoup" id="A6Q241">
    <property type="interactions" value="472"/>
</dbReference>
<dbReference type="STRING" id="387092.NIS_0436"/>
<dbReference type="KEGG" id="nis:NIS_0436"/>
<dbReference type="eggNOG" id="COG0481">
    <property type="taxonomic scope" value="Bacteria"/>
</dbReference>
<dbReference type="HOGENOM" id="CLU_009995_3_3_7"/>
<dbReference type="InParanoid" id="A6Q241"/>
<dbReference type="OrthoDB" id="9801472at2"/>
<dbReference type="Proteomes" id="UP000001118">
    <property type="component" value="Chromosome"/>
</dbReference>
<dbReference type="GO" id="GO:0005886">
    <property type="term" value="C:plasma membrane"/>
    <property type="evidence" value="ECO:0007669"/>
    <property type="project" value="UniProtKB-SubCell"/>
</dbReference>
<dbReference type="GO" id="GO:0005525">
    <property type="term" value="F:GTP binding"/>
    <property type="evidence" value="ECO:0007669"/>
    <property type="project" value="UniProtKB-UniRule"/>
</dbReference>
<dbReference type="GO" id="GO:0003924">
    <property type="term" value="F:GTPase activity"/>
    <property type="evidence" value="ECO:0007669"/>
    <property type="project" value="UniProtKB-UniRule"/>
</dbReference>
<dbReference type="GO" id="GO:0043022">
    <property type="term" value="F:ribosome binding"/>
    <property type="evidence" value="ECO:0007669"/>
    <property type="project" value="UniProtKB-UniRule"/>
</dbReference>
<dbReference type="GO" id="GO:0003746">
    <property type="term" value="F:translation elongation factor activity"/>
    <property type="evidence" value="ECO:0007669"/>
    <property type="project" value="UniProtKB-UniRule"/>
</dbReference>
<dbReference type="GO" id="GO:0045727">
    <property type="term" value="P:positive regulation of translation"/>
    <property type="evidence" value="ECO:0007669"/>
    <property type="project" value="UniProtKB-UniRule"/>
</dbReference>
<dbReference type="CDD" id="cd03699">
    <property type="entry name" value="EF4_II"/>
    <property type="match status" value="1"/>
</dbReference>
<dbReference type="CDD" id="cd16260">
    <property type="entry name" value="EF4_III"/>
    <property type="match status" value="1"/>
</dbReference>
<dbReference type="CDD" id="cd01890">
    <property type="entry name" value="LepA"/>
    <property type="match status" value="1"/>
</dbReference>
<dbReference type="CDD" id="cd03709">
    <property type="entry name" value="lepA_C"/>
    <property type="match status" value="1"/>
</dbReference>
<dbReference type="FunFam" id="3.40.50.300:FF:000078">
    <property type="entry name" value="Elongation factor 4"/>
    <property type="match status" value="1"/>
</dbReference>
<dbReference type="FunFam" id="2.40.30.10:FF:000015">
    <property type="entry name" value="Translation factor GUF1, mitochondrial"/>
    <property type="match status" value="1"/>
</dbReference>
<dbReference type="FunFam" id="3.30.70.240:FF:000007">
    <property type="entry name" value="Translation factor GUF1, mitochondrial"/>
    <property type="match status" value="1"/>
</dbReference>
<dbReference type="FunFam" id="3.30.70.2570:FF:000001">
    <property type="entry name" value="Translation factor GUF1, mitochondrial"/>
    <property type="match status" value="1"/>
</dbReference>
<dbReference type="FunFam" id="3.30.70.870:FF:000004">
    <property type="entry name" value="Translation factor GUF1, mitochondrial"/>
    <property type="match status" value="1"/>
</dbReference>
<dbReference type="Gene3D" id="3.30.70.240">
    <property type="match status" value="1"/>
</dbReference>
<dbReference type="Gene3D" id="3.30.70.2570">
    <property type="entry name" value="Elongation factor 4, C-terminal domain"/>
    <property type="match status" value="1"/>
</dbReference>
<dbReference type="Gene3D" id="3.30.70.870">
    <property type="entry name" value="Elongation Factor G (Translational Gtpase), domain 3"/>
    <property type="match status" value="1"/>
</dbReference>
<dbReference type="Gene3D" id="3.40.50.300">
    <property type="entry name" value="P-loop containing nucleotide triphosphate hydrolases"/>
    <property type="match status" value="1"/>
</dbReference>
<dbReference type="Gene3D" id="2.40.30.10">
    <property type="entry name" value="Translation factors"/>
    <property type="match status" value="1"/>
</dbReference>
<dbReference type="HAMAP" id="MF_00071">
    <property type="entry name" value="LepA"/>
    <property type="match status" value="1"/>
</dbReference>
<dbReference type="InterPro" id="IPR006297">
    <property type="entry name" value="EF-4"/>
</dbReference>
<dbReference type="InterPro" id="IPR035647">
    <property type="entry name" value="EFG_III/V"/>
</dbReference>
<dbReference type="InterPro" id="IPR000640">
    <property type="entry name" value="EFG_V-like"/>
</dbReference>
<dbReference type="InterPro" id="IPR004161">
    <property type="entry name" value="EFTu-like_2"/>
</dbReference>
<dbReference type="InterPro" id="IPR031157">
    <property type="entry name" value="G_TR_CS"/>
</dbReference>
<dbReference type="InterPro" id="IPR038363">
    <property type="entry name" value="LepA_C_sf"/>
</dbReference>
<dbReference type="InterPro" id="IPR013842">
    <property type="entry name" value="LepA_CTD"/>
</dbReference>
<dbReference type="InterPro" id="IPR035654">
    <property type="entry name" value="LepA_IV"/>
</dbReference>
<dbReference type="InterPro" id="IPR027417">
    <property type="entry name" value="P-loop_NTPase"/>
</dbReference>
<dbReference type="InterPro" id="IPR005225">
    <property type="entry name" value="Small_GTP-bd"/>
</dbReference>
<dbReference type="InterPro" id="IPR000795">
    <property type="entry name" value="T_Tr_GTP-bd_dom"/>
</dbReference>
<dbReference type="NCBIfam" id="TIGR01393">
    <property type="entry name" value="lepA"/>
    <property type="match status" value="1"/>
</dbReference>
<dbReference type="NCBIfam" id="TIGR00231">
    <property type="entry name" value="small_GTP"/>
    <property type="match status" value="1"/>
</dbReference>
<dbReference type="PANTHER" id="PTHR43512:SF4">
    <property type="entry name" value="TRANSLATION FACTOR GUF1 HOMOLOG, CHLOROPLASTIC"/>
    <property type="match status" value="1"/>
</dbReference>
<dbReference type="PANTHER" id="PTHR43512">
    <property type="entry name" value="TRANSLATION FACTOR GUF1-RELATED"/>
    <property type="match status" value="1"/>
</dbReference>
<dbReference type="Pfam" id="PF00679">
    <property type="entry name" value="EFG_C"/>
    <property type="match status" value="1"/>
</dbReference>
<dbReference type="Pfam" id="PF00009">
    <property type="entry name" value="GTP_EFTU"/>
    <property type="match status" value="1"/>
</dbReference>
<dbReference type="Pfam" id="PF03144">
    <property type="entry name" value="GTP_EFTU_D2"/>
    <property type="match status" value="1"/>
</dbReference>
<dbReference type="Pfam" id="PF06421">
    <property type="entry name" value="LepA_C"/>
    <property type="match status" value="1"/>
</dbReference>
<dbReference type="PRINTS" id="PR00315">
    <property type="entry name" value="ELONGATNFCT"/>
</dbReference>
<dbReference type="SMART" id="SM00838">
    <property type="entry name" value="EFG_C"/>
    <property type="match status" value="1"/>
</dbReference>
<dbReference type="SUPFAM" id="SSF54980">
    <property type="entry name" value="EF-G C-terminal domain-like"/>
    <property type="match status" value="2"/>
</dbReference>
<dbReference type="SUPFAM" id="SSF52540">
    <property type="entry name" value="P-loop containing nucleoside triphosphate hydrolases"/>
    <property type="match status" value="1"/>
</dbReference>
<dbReference type="PROSITE" id="PS00301">
    <property type="entry name" value="G_TR_1"/>
    <property type="match status" value="1"/>
</dbReference>
<dbReference type="PROSITE" id="PS51722">
    <property type="entry name" value="G_TR_2"/>
    <property type="match status" value="1"/>
</dbReference>
<organism>
    <name type="scientific">Nitratiruptor sp. (strain SB155-2)</name>
    <dbReference type="NCBI Taxonomy" id="387092"/>
    <lineage>
        <taxon>Bacteria</taxon>
        <taxon>Pseudomonadati</taxon>
        <taxon>Campylobacterota</taxon>
        <taxon>Epsilonproteobacteria</taxon>
        <taxon>Nautiliales</taxon>
        <taxon>Nitratiruptoraceae</taxon>
        <taxon>Nitratiruptor</taxon>
    </lineage>
</organism>
<keyword id="KW-0997">Cell inner membrane</keyword>
<keyword id="KW-1003">Cell membrane</keyword>
<keyword id="KW-0342">GTP-binding</keyword>
<keyword id="KW-0378">Hydrolase</keyword>
<keyword id="KW-0472">Membrane</keyword>
<keyword id="KW-0547">Nucleotide-binding</keyword>
<keyword id="KW-0648">Protein biosynthesis</keyword>
<keyword id="KW-1185">Reference proteome</keyword>
<proteinExistence type="inferred from homology"/>
<evidence type="ECO:0000255" key="1">
    <source>
        <dbReference type="HAMAP-Rule" id="MF_00071"/>
    </source>
</evidence>
<gene>
    <name evidence="1" type="primary">lepA</name>
    <name type="ordered locus">NIS_0436</name>
</gene>